<comment type="function">
    <text evidence="1 2 3">Diels-Alderase; part of the gene cluster that mediates the biosynthesis of pyrrolocin, a bright yellow trans-fused decalin-containing tetramic acid with antimicrobial activity (PubMed:25226362, PubMed:25351193). The PKS module of prlS together with the enoylreductase prlC catalyze the formation of the polyketide unit which is then conjugated to L-serine by the condensation domain of the prlS NRPS module (PubMed:25226362). Diels-Alderase gNR600 is involved in endo-selective Diels-Alder cycloaddition to form the decalin ring (By similarity). Subsequent methylation is carried leads to pyrrolocin A (PubMed:25226362). The methyltransferase involved in that last step has not been identified yet and is probably located outside of the prl cluster (PubMed:25226362).</text>
</comment>
<comment type="pathway">
    <text evidence="6">Mycotoxin biosynthesis.</text>
</comment>
<comment type="similarity">
    <text evidence="5">Belongs to the Diels-Alderase family.</text>
</comment>
<evidence type="ECO:0000250" key="1">
    <source>
        <dbReference type="UniProtKB" id="A0A0E4AZP0"/>
    </source>
</evidence>
<evidence type="ECO:0000269" key="2">
    <source>
    </source>
</evidence>
<evidence type="ECO:0000269" key="3">
    <source>
    </source>
</evidence>
<evidence type="ECO:0000303" key="4">
    <source>
    </source>
</evidence>
<evidence type="ECO:0000305" key="5"/>
<evidence type="ECO:0000305" key="6">
    <source>
    </source>
</evidence>
<accession>A0A089GT80</accession>
<dbReference type="EC" id="5.5.1.-" evidence="6"/>
<dbReference type="EMBL" id="KM107910">
    <property type="protein sequence ID" value="AIP87501.1"/>
    <property type="molecule type" value="Genomic_DNA"/>
</dbReference>
<dbReference type="SMR" id="A0A089GT80"/>
<dbReference type="GO" id="GO:0016853">
    <property type="term" value="F:isomerase activity"/>
    <property type="evidence" value="ECO:0007669"/>
    <property type="project" value="UniProtKB-KW"/>
</dbReference>
<dbReference type="InterPro" id="IPR054499">
    <property type="entry name" value="DA_C"/>
</dbReference>
<dbReference type="Pfam" id="PF22903">
    <property type="entry name" value="DA_C"/>
    <property type="match status" value="1"/>
</dbReference>
<dbReference type="Pfam" id="PF24137">
    <property type="entry name" value="DA_N"/>
    <property type="match status" value="1"/>
</dbReference>
<protein>
    <recommendedName>
        <fullName evidence="4">Diels-Alderase gNR600</fullName>
        <ecNumber evidence="6">5.5.1.-</ecNumber>
    </recommendedName>
    <alternativeName>
        <fullName evidence="4">Pyrrolocin biosynthesis protein gNR600</fullName>
    </alternativeName>
</protein>
<organism>
    <name type="scientific">Fungal sp. (strain NRRL 50135)</name>
    <dbReference type="NCBI Taxonomy" id="1547289"/>
    <lineage>
        <taxon>Eukaryota</taxon>
        <taxon>Fungi</taxon>
    </lineage>
</organism>
<proteinExistence type="inferred from homology"/>
<reference key="1">
    <citation type="journal article" date="2015" name="ACS Synth. Biol.">
        <title>Native promoter strategy for high-yielding synthesis and engineering of fungal secondary metabolites.</title>
        <authorList>
            <person name="Kakule T.B."/>
            <person name="Jadulco R.C."/>
            <person name="Koch M."/>
            <person name="Janso J.E."/>
            <person name="Barrows L.R."/>
            <person name="Schmidt E.W."/>
        </authorList>
    </citation>
    <scope>NUCLEOTIDE SEQUENCE [GENOMIC DNA]</scope>
    <scope>FUNCTION</scope>
    <scope>PATHWAY</scope>
</reference>
<reference key="2">
    <citation type="journal article" date="2014" name="J. Nat. Prod.">
        <title>Isolation of pyrrolocins A-C: cis- and trans-decalin tetramic acid antibiotics from an endophytic fungal-derived pathway.</title>
        <authorList>
            <person name="Jadulco R.C."/>
            <person name="Koch M."/>
            <person name="Kakule T.B."/>
            <person name="Schmidt E.W."/>
            <person name="Orendt A."/>
            <person name="He H."/>
            <person name="Janso J.E."/>
            <person name="Carter G.T."/>
            <person name="Larson E.C."/>
            <person name="Pond C."/>
            <person name="Matainaho T.K."/>
            <person name="Barrows L.R."/>
        </authorList>
    </citation>
    <scope>FUNCTION</scope>
</reference>
<gene>
    <name evidence="4" type="ORF">gNR600</name>
</gene>
<sequence>MAGTFVSVLDISGDSVVTGPVPVEPFVPGSANLFPKMTSRINDTAWELWEFEGFSAGGEAAVGVSLYRDARGVDKGGFHAEVNAIWPDGRKWGQTLYFAESIVTAEGASPDEGRIHGFWRSNSNTAGGAPAAARSITFSISEDLGVATVCFSVPDQVTGTIELRSSGSNRKSCLPATEEAALLYPSVYYMFPMGPVDANADLTFSFSATAGGEIEEERKLSVQSRGGGHGGMVRGWSTEAWPQFMNDAYYVVAKVGSYMLQMLRVVGSAAAGHRPYAVARLYLNKELVCAANQAVDAQSAAEGSTATTQPRDMVAVEKVLSEPKSQEQVVSGAFSDKNIGYVIEFISGQQKRWRFDARHKRAWWSEPTSAPGPGCTGKSGWIEGFLGGSDGETFEGAGVGGQLQIPVP</sequence>
<feature type="chain" id="PRO_0000441294" description="Diels-Alderase gNR600">
    <location>
        <begin position="1"/>
        <end position="408"/>
    </location>
</feature>
<name>PRL3_FUNXX</name>
<keyword id="KW-0413">Isomerase</keyword>